<name>SWP12_NOSB1</name>
<feature type="chain" id="PRO_0000382913" description="Spore wall protein 12">
    <location>
        <begin position="1"/>
        <end position="228"/>
    </location>
</feature>
<feature type="glycosylation site" description="N-linked (GlcNAc...) asparagine" evidence="1">
    <location>
        <position position="117"/>
    </location>
</feature>
<reference key="1">
    <citation type="journal article" date="2008" name="Proteomics">
        <title>Proteomic analysis of spore wall proteins and identification of two spore wall proteins from Nosema bombycis (Microsporidia).</title>
        <authorList>
            <person name="Wu Z."/>
            <person name="Li Y."/>
            <person name="Pan G."/>
            <person name="Tan X."/>
            <person name="Hu J."/>
            <person name="Zhou Z."/>
            <person name="Xiang Z."/>
        </authorList>
    </citation>
    <scope>NUCLEOTIDE SEQUENCE [GENOMIC DNA]</scope>
    <scope>IDENTIFICATION BY MASS SPECTROMETRY</scope>
    <scope>SUBCELLULAR LOCATION</scope>
    <source>
        <strain>CQ1 / CVCC 102059</strain>
    </source>
</reference>
<reference key="2">
    <citation type="journal article" date="2013" name="BMC Genomics">
        <title>Comparative genomics of parasitic silkworm microsporidia reveal an association between genome expansion and host adaptation.</title>
        <authorList>
            <person name="Pan G."/>
            <person name="Xu J."/>
            <person name="Li T."/>
            <person name="Xia Q."/>
            <person name="Liu S.L."/>
            <person name="Zhang G."/>
            <person name="Li S."/>
            <person name="Li C."/>
            <person name="Liu H."/>
            <person name="Yang L."/>
            <person name="Liu T."/>
            <person name="Zhang X."/>
            <person name="Wu Z."/>
            <person name="Fan W."/>
            <person name="Dang X."/>
            <person name="Xiang H."/>
            <person name="Tao M."/>
            <person name="Li Y."/>
            <person name="Hu J."/>
            <person name="Li Z."/>
            <person name="Lin L."/>
            <person name="Luo J."/>
            <person name="Geng L."/>
            <person name="Wang L."/>
            <person name="Long M."/>
            <person name="Wan Y."/>
            <person name="He N."/>
            <person name="Zhang Z."/>
            <person name="Lu C."/>
            <person name="Keeling P.J."/>
            <person name="Wang J."/>
            <person name="Xiang Z."/>
            <person name="Zhou Z."/>
        </authorList>
    </citation>
    <scope>NUCLEOTIDE SEQUENCE [LARGE SCALE GENOMIC DNA]</scope>
    <source>
        <strain>CQ1 / CVCC 102059</strain>
    </source>
</reference>
<comment type="subcellular location">
    <subcellularLocation>
        <location evidence="2">Spore wall</location>
    </subcellularLocation>
</comment>
<comment type="similarity">
    <text evidence="3">Belongs to the SWP12 family.</text>
</comment>
<evidence type="ECO:0000255" key="1"/>
<evidence type="ECO:0000269" key="2">
    <source>
    </source>
</evidence>
<evidence type="ECO:0000305" key="3"/>
<accession>B3STP6</accession>
<accession>R0KW61</accession>
<dbReference type="EMBL" id="EF683112">
    <property type="protein sequence ID" value="ABV48900.1"/>
    <property type="molecule type" value="Genomic_DNA"/>
</dbReference>
<dbReference type="EMBL" id="KB908936">
    <property type="protein sequence ID" value="EOB14427.1"/>
    <property type="molecule type" value="Genomic_DNA"/>
</dbReference>
<dbReference type="SMR" id="B3STP6"/>
<dbReference type="GlyCosmos" id="B3STP6">
    <property type="glycosylation" value="1 site, No reported glycans"/>
</dbReference>
<dbReference type="EnsemblFungi" id="EOB14427">
    <property type="protein sequence ID" value="EOB14427"/>
    <property type="gene ID" value="NBO_28g0066"/>
</dbReference>
<dbReference type="VEuPathDB" id="MicrosporidiaDB:NBO_28g0066"/>
<dbReference type="HOGENOM" id="CLU_098346_0_0_1"/>
<dbReference type="OMA" id="IDYVNAD"/>
<dbReference type="OrthoDB" id="2194161at2759"/>
<dbReference type="Proteomes" id="UP000016927">
    <property type="component" value="Unassembled WGS sequence"/>
</dbReference>
<dbReference type="GO" id="GO:0031160">
    <property type="term" value="C:spore wall"/>
    <property type="evidence" value="ECO:0007669"/>
    <property type="project" value="UniProtKB-SubCell"/>
</dbReference>
<dbReference type="GO" id="GO:0030435">
    <property type="term" value="P:sporulation resulting in formation of a cellular spore"/>
    <property type="evidence" value="ECO:0007669"/>
    <property type="project" value="UniProtKB-KW"/>
</dbReference>
<dbReference type="Gene3D" id="1.20.1270.60">
    <property type="entry name" value="Arfaptin homology (AH) domain/BAR domain"/>
    <property type="match status" value="1"/>
</dbReference>
<dbReference type="InterPro" id="IPR027267">
    <property type="entry name" value="AH/BAR_dom_sf"/>
</dbReference>
<dbReference type="SUPFAM" id="SSF103657">
    <property type="entry name" value="BAR/IMD domain-like"/>
    <property type="match status" value="1"/>
</dbReference>
<keyword id="KW-0325">Glycoprotein</keyword>
<keyword id="KW-1185">Reference proteome</keyword>
<keyword id="KW-0749">Sporulation</keyword>
<organism>
    <name type="scientific">Nosema bombycis (strain CQ1 / CVCC 102059)</name>
    <name type="common">Microsporidian parasite</name>
    <name type="synonym">Pebrine of silkworm</name>
    <dbReference type="NCBI Taxonomy" id="578461"/>
    <lineage>
        <taxon>Eukaryota</taxon>
        <taxon>Fungi</taxon>
        <taxon>Fungi incertae sedis</taxon>
        <taxon>Microsporidia</taxon>
        <taxon>Nosematidae</taxon>
        <taxon>Nosema</taxon>
    </lineage>
</organism>
<proteinExistence type="evidence at protein level"/>
<protein>
    <recommendedName>
        <fullName>Spore wall protein 12</fullName>
    </recommendedName>
</protein>
<gene>
    <name type="primary">SWP12</name>
    <name type="synonym">HSWP12</name>
    <name type="ORF">NBO_28g0066</name>
</gene>
<sequence>MKDFKKKIIMKISRIEYKHTAFSAEYKDVEKVYKKLRDNMDKVATGINNLMTYEHGGSAMKKIYHGLSMVSSASRMNYFSDADIFEGFARINKDLTDSDLDEGVREVGRKTAEAYENISKAKEKFNEQCGREMEVLMSMKKRAETTDKERENAKIYRYDLEKAKQSNNPEDQEEVDRLSELFENSQTRTIEMMRDFIGADGLQGVLTRVRDLNIEFHQESVKALERTK</sequence>